<name>RS5_SHESA</name>
<keyword id="KW-0687">Ribonucleoprotein</keyword>
<keyword id="KW-0689">Ribosomal protein</keyword>
<keyword id="KW-0694">RNA-binding</keyword>
<keyword id="KW-0699">rRNA-binding</keyword>
<evidence type="ECO:0000255" key="1">
    <source>
        <dbReference type="HAMAP-Rule" id="MF_01307"/>
    </source>
</evidence>
<evidence type="ECO:0000305" key="2"/>
<dbReference type="EMBL" id="CP000469">
    <property type="protein sequence ID" value="ABK46460.1"/>
    <property type="molecule type" value="Genomic_DNA"/>
</dbReference>
<dbReference type="RefSeq" id="WP_007644438.1">
    <property type="nucleotide sequence ID" value="NC_008577.1"/>
</dbReference>
<dbReference type="SMR" id="A0KRP1"/>
<dbReference type="STRING" id="94122.Shewana3_0216"/>
<dbReference type="GeneID" id="94726203"/>
<dbReference type="KEGG" id="shn:Shewana3_0216"/>
<dbReference type="eggNOG" id="COG0098">
    <property type="taxonomic scope" value="Bacteria"/>
</dbReference>
<dbReference type="HOGENOM" id="CLU_065898_2_2_6"/>
<dbReference type="OrthoDB" id="9809045at2"/>
<dbReference type="Proteomes" id="UP000002589">
    <property type="component" value="Chromosome"/>
</dbReference>
<dbReference type="GO" id="GO:0015935">
    <property type="term" value="C:small ribosomal subunit"/>
    <property type="evidence" value="ECO:0007669"/>
    <property type="project" value="InterPro"/>
</dbReference>
<dbReference type="GO" id="GO:0019843">
    <property type="term" value="F:rRNA binding"/>
    <property type="evidence" value="ECO:0007669"/>
    <property type="project" value="UniProtKB-UniRule"/>
</dbReference>
<dbReference type="GO" id="GO:0003735">
    <property type="term" value="F:structural constituent of ribosome"/>
    <property type="evidence" value="ECO:0007669"/>
    <property type="project" value="InterPro"/>
</dbReference>
<dbReference type="GO" id="GO:0006412">
    <property type="term" value="P:translation"/>
    <property type="evidence" value="ECO:0007669"/>
    <property type="project" value="UniProtKB-UniRule"/>
</dbReference>
<dbReference type="FunFam" id="3.30.160.20:FF:000001">
    <property type="entry name" value="30S ribosomal protein S5"/>
    <property type="match status" value="1"/>
</dbReference>
<dbReference type="FunFam" id="3.30.230.10:FF:000002">
    <property type="entry name" value="30S ribosomal protein S5"/>
    <property type="match status" value="1"/>
</dbReference>
<dbReference type="Gene3D" id="3.30.160.20">
    <property type="match status" value="1"/>
</dbReference>
<dbReference type="Gene3D" id="3.30.230.10">
    <property type="match status" value="1"/>
</dbReference>
<dbReference type="HAMAP" id="MF_01307_B">
    <property type="entry name" value="Ribosomal_uS5_B"/>
    <property type="match status" value="1"/>
</dbReference>
<dbReference type="InterPro" id="IPR020568">
    <property type="entry name" value="Ribosomal_Su5_D2-typ_SF"/>
</dbReference>
<dbReference type="InterPro" id="IPR000851">
    <property type="entry name" value="Ribosomal_uS5"/>
</dbReference>
<dbReference type="InterPro" id="IPR005712">
    <property type="entry name" value="Ribosomal_uS5_bac-type"/>
</dbReference>
<dbReference type="InterPro" id="IPR005324">
    <property type="entry name" value="Ribosomal_uS5_C"/>
</dbReference>
<dbReference type="InterPro" id="IPR013810">
    <property type="entry name" value="Ribosomal_uS5_N"/>
</dbReference>
<dbReference type="InterPro" id="IPR018192">
    <property type="entry name" value="Ribosomal_uS5_N_CS"/>
</dbReference>
<dbReference type="InterPro" id="IPR014721">
    <property type="entry name" value="Ribsml_uS5_D2-typ_fold_subgr"/>
</dbReference>
<dbReference type="NCBIfam" id="TIGR01021">
    <property type="entry name" value="rpsE_bact"/>
    <property type="match status" value="1"/>
</dbReference>
<dbReference type="PANTHER" id="PTHR48277">
    <property type="entry name" value="MITOCHONDRIAL RIBOSOMAL PROTEIN S5"/>
    <property type="match status" value="1"/>
</dbReference>
<dbReference type="PANTHER" id="PTHR48277:SF1">
    <property type="entry name" value="MITOCHONDRIAL RIBOSOMAL PROTEIN S5"/>
    <property type="match status" value="1"/>
</dbReference>
<dbReference type="Pfam" id="PF00333">
    <property type="entry name" value="Ribosomal_S5"/>
    <property type="match status" value="1"/>
</dbReference>
<dbReference type="Pfam" id="PF03719">
    <property type="entry name" value="Ribosomal_S5_C"/>
    <property type="match status" value="1"/>
</dbReference>
<dbReference type="SUPFAM" id="SSF54768">
    <property type="entry name" value="dsRNA-binding domain-like"/>
    <property type="match status" value="1"/>
</dbReference>
<dbReference type="SUPFAM" id="SSF54211">
    <property type="entry name" value="Ribosomal protein S5 domain 2-like"/>
    <property type="match status" value="1"/>
</dbReference>
<dbReference type="PROSITE" id="PS00585">
    <property type="entry name" value="RIBOSOMAL_S5"/>
    <property type="match status" value="1"/>
</dbReference>
<dbReference type="PROSITE" id="PS50881">
    <property type="entry name" value="S5_DSRBD"/>
    <property type="match status" value="1"/>
</dbReference>
<proteinExistence type="inferred from homology"/>
<organism>
    <name type="scientific">Shewanella sp. (strain ANA-3)</name>
    <dbReference type="NCBI Taxonomy" id="94122"/>
    <lineage>
        <taxon>Bacteria</taxon>
        <taxon>Pseudomonadati</taxon>
        <taxon>Pseudomonadota</taxon>
        <taxon>Gammaproteobacteria</taxon>
        <taxon>Alteromonadales</taxon>
        <taxon>Shewanellaceae</taxon>
        <taxon>Shewanella</taxon>
    </lineage>
</organism>
<protein>
    <recommendedName>
        <fullName evidence="1">Small ribosomal subunit protein uS5</fullName>
    </recommendedName>
    <alternativeName>
        <fullName evidence="2">30S ribosomal protein S5</fullName>
    </alternativeName>
</protein>
<feature type="chain" id="PRO_0000323199" description="Small ribosomal subunit protein uS5">
    <location>
        <begin position="1"/>
        <end position="167"/>
    </location>
</feature>
<feature type="domain" description="S5 DRBM" evidence="1">
    <location>
        <begin position="12"/>
        <end position="75"/>
    </location>
</feature>
<accession>A0KRP1</accession>
<sequence>MAKLEAQQKDDLQEKLIAVNRVSKVVKGGRIFSFTALTVVGDGNGKVGYGYGKAREVPAAIQKAMEKARRNMVTVELNAGTLHHPVKGRHTGSRVYMQPASQGTGIIAGGAMRAVLEVAGVHNVLSKAYGSTNPINIVRATVDALVHMKSPSQIAAKRGLNVDEIRG</sequence>
<gene>
    <name evidence="1" type="primary">rpsE</name>
    <name type="ordered locus">Shewana3_0216</name>
</gene>
<reference key="1">
    <citation type="submission" date="2006-09" db="EMBL/GenBank/DDBJ databases">
        <title>Complete sequence of chromosome 1 of Shewanella sp. ANA-3.</title>
        <authorList>
            <person name="Copeland A."/>
            <person name="Lucas S."/>
            <person name="Lapidus A."/>
            <person name="Barry K."/>
            <person name="Detter J.C."/>
            <person name="Glavina del Rio T."/>
            <person name="Hammon N."/>
            <person name="Israni S."/>
            <person name="Dalin E."/>
            <person name="Tice H."/>
            <person name="Pitluck S."/>
            <person name="Chertkov O."/>
            <person name="Brettin T."/>
            <person name="Bruce D."/>
            <person name="Han C."/>
            <person name="Tapia R."/>
            <person name="Gilna P."/>
            <person name="Schmutz J."/>
            <person name="Larimer F."/>
            <person name="Land M."/>
            <person name="Hauser L."/>
            <person name="Kyrpides N."/>
            <person name="Kim E."/>
            <person name="Newman D."/>
            <person name="Salticov C."/>
            <person name="Konstantinidis K."/>
            <person name="Klappenback J."/>
            <person name="Tiedje J."/>
            <person name="Richardson P."/>
        </authorList>
    </citation>
    <scope>NUCLEOTIDE SEQUENCE [LARGE SCALE GENOMIC DNA]</scope>
    <source>
        <strain>ANA-3</strain>
    </source>
</reference>
<comment type="function">
    <text evidence="1">With S4 and S12 plays an important role in translational accuracy.</text>
</comment>
<comment type="function">
    <text evidence="1">Located at the back of the 30S subunit body where it stabilizes the conformation of the head with respect to the body.</text>
</comment>
<comment type="subunit">
    <text evidence="1">Part of the 30S ribosomal subunit. Contacts proteins S4 and S8.</text>
</comment>
<comment type="domain">
    <text>The N-terminal domain interacts with the head of the 30S subunit; the C-terminal domain interacts with the body and contacts protein S4. The interaction surface between S4 and S5 is involved in control of translational fidelity.</text>
</comment>
<comment type="similarity">
    <text evidence="1">Belongs to the universal ribosomal protein uS5 family.</text>
</comment>